<dbReference type="EMBL" id="AL123456">
    <property type="protein sequence ID" value="CCP44394.1"/>
    <property type="molecule type" value="Genomic_DNA"/>
</dbReference>
<dbReference type="PIR" id="D70559">
    <property type="entry name" value="D70559"/>
</dbReference>
<dbReference type="RefSeq" id="NP_216146.1">
    <property type="nucleotide sequence ID" value="NC_000962.3"/>
</dbReference>
<dbReference type="RefSeq" id="WP_003408066.1">
    <property type="nucleotide sequence ID" value="NZ_NVQJ01000016.1"/>
</dbReference>
<dbReference type="PDB" id="4NNG">
    <property type="method" value="X-ray"/>
    <property type="resolution" value="2.02 A"/>
    <property type="chains" value="A=285-435"/>
</dbReference>
<dbReference type="PDB" id="4NNI">
    <property type="method" value="X-ray"/>
    <property type="resolution" value="2.64 A"/>
    <property type="chains" value="A/B=285-438"/>
</dbReference>
<dbReference type="PDB" id="4NNK">
    <property type="method" value="X-ray"/>
    <property type="resolution" value="2.31 A"/>
    <property type="chains" value="A=285-434"/>
</dbReference>
<dbReference type="PDBsum" id="4NNG"/>
<dbReference type="PDBsum" id="4NNI"/>
<dbReference type="PDBsum" id="4NNK"/>
<dbReference type="SMR" id="P9WH43"/>
<dbReference type="FunCoup" id="P9WH43">
    <property type="interactions" value="323"/>
</dbReference>
<dbReference type="STRING" id="83332.Rv1630"/>
<dbReference type="PaxDb" id="83332-Rv1630"/>
<dbReference type="DNASU" id="885188"/>
<dbReference type="GeneID" id="885188"/>
<dbReference type="KEGG" id="mtu:Rv1630"/>
<dbReference type="KEGG" id="mtv:RVBD_1630"/>
<dbReference type="TubercuList" id="Rv1630"/>
<dbReference type="eggNOG" id="COG0539">
    <property type="taxonomic scope" value="Bacteria"/>
</dbReference>
<dbReference type="InParanoid" id="P9WH43"/>
<dbReference type="OrthoDB" id="9804077at2"/>
<dbReference type="PhylomeDB" id="P9WH43"/>
<dbReference type="EvolutionaryTrace" id="P9WH43"/>
<dbReference type="PRO" id="PR:P9WH43"/>
<dbReference type="Proteomes" id="UP000001584">
    <property type="component" value="Chromosome"/>
</dbReference>
<dbReference type="GO" id="GO:0005829">
    <property type="term" value="C:cytosol"/>
    <property type="evidence" value="ECO:0007005"/>
    <property type="project" value="MTBBASE"/>
</dbReference>
<dbReference type="GO" id="GO:0022627">
    <property type="term" value="C:cytosolic small ribosomal subunit"/>
    <property type="evidence" value="ECO:0000318"/>
    <property type="project" value="GO_Central"/>
</dbReference>
<dbReference type="GO" id="GO:0009274">
    <property type="term" value="C:peptidoglycan-based cell wall"/>
    <property type="evidence" value="ECO:0007005"/>
    <property type="project" value="MTBBASE"/>
</dbReference>
<dbReference type="GO" id="GO:0005886">
    <property type="term" value="C:plasma membrane"/>
    <property type="evidence" value="ECO:0007005"/>
    <property type="project" value="MTBBASE"/>
</dbReference>
<dbReference type="GO" id="GO:0003729">
    <property type="term" value="F:mRNA binding"/>
    <property type="evidence" value="ECO:0000318"/>
    <property type="project" value="GO_Central"/>
</dbReference>
<dbReference type="GO" id="GO:0003735">
    <property type="term" value="F:structural constituent of ribosome"/>
    <property type="evidence" value="ECO:0000318"/>
    <property type="project" value="GO_Central"/>
</dbReference>
<dbReference type="GO" id="GO:0006412">
    <property type="term" value="P:translation"/>
    <property type="evidence" value="ECO:0000318"/>
    <property type="project" value="GO_Central"/>
</dbReference>
<dbReference type="CDD" id="cd05687">
    <property type="entry name" value="S1_RPS1_repeat_ec1_hs1"/>
    <property type="match status" value="1"/>
</dbReference>
<dbReference type="CDD" id="cd04465">
    <property type="entry name" value="S1_RPS1_repeat_ec2_hs2"/>
    <property type="match status" value="1"/>
</dbReference>
<dbReference type="CDD" id="cd05688">
    <property type="entry name" value="S1_RPS1_repeat_ec3"/>
    <property type="match status" value="1"/>
</dbReference>
<dbReference type="FunFam" id="2.40.50.140:FF:000013">
    <property type="entry name" value="30S ribosomal protein S1"/>
    <property type="match status" value="1"/>
</dbReference>
<dbReference type="FunFam" id="2.40.50.140:FF:000031">
    <property type="entry name" value="30S ribosomal protein S1"/>
    <property type="match status" value="1"/>
</dbReference>
<dbReference type="FunFam" id="2.40.50.140:FF:000035">
    <property type="entry name" value="30S ribosomal protein S1"/>
    <property type="match status" value="1"/>
</dbReference>
<dbReference type="FunFam" id="2.40.50.140:FF:000039">
    <property type="entry name" value="30S ribosomal protein S1"/>
    <property type="match status" value="1"/>
</dbReference>
<dbReference type="Gene3D" id="2.40.50.140">
    <property type="entry name" value="Nucleic acid-binding proteins"/>
    <property type="match status" value="4"/>
</dbReference>
<dbReference type="InterPro" id="IPR012340">
    <property type="entry name" value="NA-bd_OB-fold"/>
</dbReference>
<dbReference type="InterPro" id="IPR050437">
    <property type="entry name" value="Ribos_protein_bS1-like"/>
</dbReference>
<dbReference type="InterPro" id="IPR035104">
    <property type="entry name" value="Ribosomal_protein_S1-like"/>
</dbReference>
<dbReference type="InterPro" id="IPR003029">
    <property type="entry name" value="S1_domain"/>
</dbReference>
<dbReference type="NCBIfam" id="NF005208">
    <property type="entry name" value="PRK06676.1"/>
    <property type="match status" value="1"/>
</dbReference>
<dbReference type="NCBIfam" id="NF005911">
    <property type="entry name" value="PRK07899.1"/>
    <property type="match status" value="1"/>
</dbReference>
<dbReference type="PANTHER" id="PTHR10724">
    <property type="entry name" value="30S RIBOSOMAL PROTEIN S1"/>
    <property type="match status" value="1"/>
</dbReference>
<dbReference type="PANTHER" id="PTHR10724:SF7">
    <property type="entry name" value="SMALL RIBOSOMAL SUBUNIT PROTEIN BS1C"/>
    <property type="match status" value="1"/>
</dbReference>
<dbReference type="Pfam" id="PF00575">
    <property type="entry name" value="S1"/>
    <property type="match status" value="4"/>
</dbReference>
<dbReference type="PRINTS" id="PR00681">
    <property type="entry name" value="RIBOSOMALS1"/>
</dbReference>
<dbReference type="SMART" id="SM00316">
    <property type="entry name" value="S1"/>
    <property type="match status" value="4"/>
</dbReference>
<dbReference type="SUPFAM" id="SSF50249">
    <property type="entry name" value="Nucleic acid-binding proteins"/>
    <property type="match status" value="4"/>
</dbReference>
<dbReference type="PROSITE" id="PS50126">
    <property type="entry name" value="S1"/>
    <property type="match status" value="4"/>
</dbReference>
<gene>
    <name type="primary">rpsA</name>
    <name type="ordered locus">Rv1630</name>
    <name type="ORF">MTCY01B2.22</name>
</gene>
<protein>
    <recommendedName>
        <fullName evidence="6">Small ribosomal subunit protein bS1</fullName>
    </recommendedName>
    <alternativeName>
        <fullName>30S ribosomal protein S1</fullName>
    </alternativeName>
</protein>
<name>RS1_MYCTU</name>
<feature type="chain" id="PRO_0000196042" description="Small ribosomal subunit protein bS1">
    <location>
        <begin position="1"/>
        <end position="481"/>
    </location>
</feature>
<feature type="domain" description="S1 motif 1" evidence="2">
    <location>
        <begin position="36"/>
        <end position="105"/>
    </location>
</feature>
<feature type="domain" description="S1 motif 2" evidence="2">
    <location>
        <begin position="123"/>
        <end position="188"/>
    </location>
</feature>
<feature type="domain" description="S1 motif 3" evidence="2">
    <location>
        <begin position="209"/>
        <end position="277"/>
    </location>
</feature>
<feature type="domain" description="S1 motif 4" evidence="2">
    <location>
        <begin position="294"/>
        <end position="363"/>
    </location>
</feature>
<feature type="region of interest" description="Disordered" evidence="3">
    <location>
        <begin position="429"/>
        <end position="467"/>
    </location>
</feature>
<feature type="compositionally biased region" description="Low complexity" evidence="3">
    <location>
        <begin position="437"/>
        <end position="456"/>
    </location>
</feature>
<feature type="mutagenesis site" description="2.5-fold decrease in binding of POA, decreased binding of tmRNA (expressed as residues 285-481)." evidence="5">
    <original>K</original>
    <variation>A</variation>
    <location>
        <position position="303"/>
    </location>
</feature>
<feature type="mutagenesis site" description="Complete loss of POA binding, significantly decreased binding of tmRNA (expressed as residues 285-481)." evidence="5">
    <original>FGAF</original>
    <variation>AGAL</variation>
    <location>
        <begin position="307"/>
        <end position="310"/>
    </location>
</feature>
<feature type="mutagenesis site" description="2.5-fold decrease in binding of POA, decreased binding of tmRNA (expressed as residues 285-481)." evidence="5">
    <original>F</original>
    <variation>A</variation>
    <location>
        <position position="307"/>
    </location>
</feature>
<feature type="mutagenesis site" description="3-fold decrease in binding of POA, decreased binding of tmRNA (expressed as residues 285-481)." evidence="5">
    <original>F</original>
    <variation>G</variation>
    <location>
        <position position="310"/>
    </location>
</feature>
<feature type="mutagenesis site" description="2.7-fold decrease in binding of POA, decreased binding of tmRNA (expressed as residues 285-481)." evidence="5">
    <original>R</original>
    <variation>A</variation>
    <location>
        <position position="357"/>
    </location>
</feature>
<feature type="mutagenesis site" description="Does not bind POA. Binds tmRNA less strongly than wild-type, binding is not disrupted by POA." evidence="4 5">
    <location>
        <position position="438"/>
    </location>
</feature>
<feature type="helix" evidence="9">
    <location>
        <begin position="285"/>
        <end position="290"/>
    </location>
</feature>
<feature type="strand" evidence="9">
    <location>
        <begin position="296"/>
        <end position="305"/>
    </location>
</feature>
<feature type="strand" evidence="9">
    <location>
        <begin position="308"/>
        <end position="314"/>
    </location>
</feature>
<feature type="strand" evidence="9">
    <location>
        <begin position="317"/>
        <end position="322"/>
    </location>
</feature>
<feature type="helix" evidence="9">
    <location>
        <begin position="323"/>
        <end position="325"/>
    </location>
</feature>
<feature type="helix" evidence="9">
    <location>
        <begin position="334"/>
        <end position="336"/>
    </location>
</feature>
<feature type="strand" evidence="9">
    <location>
        <begin position="343"/>
        <end position="352"/>
    </location>
</feature>
<feature type="turn" evidence="9">
    <location>
        <begin position="353"/>
        <end position="356"/>
    </location>
</feature>
<feature type="strand" evidence="9">
    <location>
        <begin position="357"/>
        <end position="361"/>
    </location>
</feature>
<feature type="helix" evidence="9">
    <location>
        <begin position="362"/>
        <end position="368"/>
    </location>
</feature>
<feature type="helix" evidence="9">
    <location>
        <begin position="375"/>
        <end position="377"/>
    </location>
</feature>
<feature type="helix" evidence="9">
    <location>
        <begin position="381"/>
        <end position="383"/>
    </location>
</feature>
<feature type="turn" evidence="9">
    <location>
        <begin position="398"/>
        <end position="401"/>
    </location>
</feature>
<feature type="helix" evidence="9">
    <location>
        <begin position="408"/>
        <end position="433"/>
    </location>
</feature>
<feature type="turn" evidence="10">
    <location>
        <begin position="434"/>
        <end position="437"/>
    </location>
</feature>
<comment type="function">
    <text evidence="1 4">Binds mRNA, facilitating recognition of most mRNAs by the 30S ribosomal subunit during translation initiation (By similarity). Probably plays a role in trans-translation; binds tmRNA (the product of the ssrA gene) (PubMed:21835980). In trans-translation Ala-aminoacylated transfer-messenger RNA (tmRNA, product of the ssrA gene; the 2 termini fold to resemble tRNA(Ala) while it encodes a short internal open reading frame (the tag peptide)) acts like a tRNA, entering the A-site of the ribosome and displacing the stalled mRNA (which is subsequently degraded). The ribosome then switches to translate the ORF on the tmRNA, the nascent peptide is terminated with the 'tag peptide' encoded by the tmRNA and thus targeted for degradation (By similarity).</text>
</comment>
<comment type="function">
    <text evidence="4">Binds pyrazinoic acid (POA), the active form of the prodrug pyrazinamide (PZA); POA disrupts tmRNA binding (at 50 ug/ml in vitro) and also trans-translation (at 25 ug/ml in vitro using purified H37Ra ribosomes).</text>
</comment>
<comment type="domain">
    <text evidence="8">Full-length S1 protein and the C-terminal domain (residues 285-481) bind tmRNA; the interaction is disrupted in a concentration-dependent manner by POA. 2 POA molecules bind to the C-terminal domain (residues 285-481) and S1 motif 4 (residues 285-368).</text>
</comment>
<comment type="miscellaneous">
    <text evidence="7">Mutations in this gene that alter POA binding may cause antibiotic resistance.</text>
</comment>
<comment type="similarity">
    <text evidence="6">Belongs to the bacterial ribosomal protein bS1 family.</text>
</comment>
<organism>
    <name type="scientific">Mycobacterium tuberculosis (strain ATCC 25618 / H37Rv)</name>
    <dbReference type="NCBI Taxonomy" id="83332"/>
    <lineage>
        <taxon>Bacteria</taxon>
        <taxon>Bacillati</taxon>
        <taxon>Actinomycetota</taxon>
        <taxon>Actinomycetes</taxon>
        <taxon>Mycobacteriales</taxon>
        <taxon>Mycobacteriaceae</taxon>
        <taxon>Mycobacterium</taxon>
        <taxon>Mycobacterium tuberculosis complex</taxon>
    </lineage>
</organism>
<sequence>MPSPTVTSPQVAVNDIGSSEDFLAAIDKTIKYFNDGDIVEGTIVKVDRDEVLLDIGYKTEGVIPARELSIKHDVDPNEVVSVGDEVEALVLTKEDKEGRLILSKKRAQYERAWGTIEALKEKDEAVKGTVIEVVKGGLILDIGLRGFLPASLVEMRRVRDLQPYIGKEIEAKIIELDKNRNNVVLSRRAWLEQTQSEVRSEFLNNLQKGTIRKGVVSSIVNFGAFVDLGGVDGLVHVSELSWKHIDHPSEVVQVGDEVTVEVLDVDMDRERVSLSLKATQEDPWRHFARTHAIGQIVPGKVTKLVPFGAFVRVEEGIEGLVHISELAERHVEVPDQVVAVGDDAMVKVIDIDLERRRISLSLKQANEDYTEEFDPAKYGMADSYDEQGNYIFPEGFDAETNEWLEGFEKQRAEWEARYAEAERRHKMHTAQMEKFAAAEAAGRGADDQSSASSAPSEKTAGGSLASDAQLAALREKLAGSA</sequence>
<keyword id="KW-0002">3D-structure</keyword>
<keyword id="KW-1185">Reference proteome</keyword>
<keyword id="KW-0677">Repeat</keyword>
<keyword id="KW-0687">Ribonucleoprotein</keyword>
<keyword id="KW-0689">Ribosomal protein</keyword>
<keyword id="KW-0694">RNA-binding</keyword>
<accession>P9WH43</accession>
<accession>L0TA09</accession>
<accession>O06147</accession>
<proteinExistence type="evidence at protein level"/>
<reference key="1">
    <citation type="journal article" date="1998" name="Nature">
        <title>Deciphering the biology of Mycobacterium tuberculosis from the complete genome sequence.</title>
        <authorList>
            <person name="Cole S.T."/>
            <person name="Brosch R."/>
            <person name="Parkhill J."/>
            <person name="Garnier T."/>
            <person name="Churcher C.M."/>
            <person name="Harris D.E."/>
            <person name="Gordon S.V."/>
            <person name="Eiglmeier K."/>
            <person name="Gas S."/>
            <person name="Barry C.E. III"/>
            <person name="Tekaia F."/>
            <person name="Badcock K."/>
            <person name="Basham D."/>
            <person name="Brown D."/>
            <person name="Chillingworth T."/>
            <person name="Connor R."/>
            <person name="Davies R.M."/>
            <person name="Devlin K."/>
            <person name="Feltwell T."/>
            <person name="Gentles S."/>
            <person name="Hamlin N."/>
            <person name="Holroyd S."/>
            <person name="Hornsby T."/>
            <person name="Jagels K."/>
            <person name="Krogh A."/>
            <person name="McLean J."/>
            <person name="Moule S."/>
            <person name="Murphy L.D."/>
            <person name="Oliver S."/>
            <person name="Osborne J."/>
            <person name="Quail M.A."/>
            <person name="Rajandream M.A."/>
            <person name="Rogers J."/>
            <person name="Rutter S."/>
            <person name="Seeger K."/>
            <person name="Skelton S."/>
            <person name="Squares S."/>
            <person name="Squares R."/>
            <person name="Sulston J.E."/>
            <person name="Taylor K."/>
            <person name="Whitehead S."/>
            <person name="Barrell B.G."/>
        </authorList>
    </citation>
    <scope>NUCLEOTIDE SEQUENCE [LARGE SCALE GENOMIC DNA]</scope>
    <source>
        <strain>ATCC 25618 / H37Rv</strain>
    </source>
</reference>
<reference key="2">
    <citation type="journal article" date="2011" name="Mol. Cell. Proteomics">
        <title>Proteogenomic analysis of Mycobacterium tuberculosis by high resolution mass spectrometry.</title>
        <authorList>
            <person name="Kelkar D.S."/>
            <person name="Kumar D."/>
            <person name="Kumar P."/>
            <person name="Balakrishnan L."/>
            <person name="Muthusamy B."/>
            <person name="Yadav A.K."/>
            <person name="Shrivastava P."/>
            <person name="Marimuthu A."/>
            <person name="Anand S."/>
            <person name="Sundaram H."/>
            <person name="Kingsbury R."/>
            <person name="Harsha H.C."/>
            <person name="Nair B."/>
            <person name="Prasad T.S."/>
            <person name="Chauhan D.S."/>
            <person name="Katoch K."/>
            <person name="Katoch V.M."/>
            <person name="Kumar P."/>
            <person name="Chaerkady R."/>
            <person name="Ramachandran S."/>
            <person name="Dash D."/>
            <person name="Pandey A."/>
        </authorList>
    </citation>
    <scope>IDENTIFICATION BY MASS SPECTROMETRY [LARGE SCALE ANALYSIS]</scope>
    <source>
        <strain>ATCC 25618 / H37Rv</strain>
    </source>
</reference>
<reference key="3">
    <citation type="journal article" date="2011" name="Science">
        <title>Pyrazinamide inhibits trans-translation in Mycobacterium tuberculosis.</title>
        <authorList>
            <person name="Shi W."/>
            <person name="Zhang X."/>
            <person name="Jiang X."/>
            <person name="Yuan H."/>
            <person name="Lee J.S."/>
            <person name="Barry C.E. III"/>
            <person name="Wang H."/>
            <person name="Zhang W."/>
            <person name="Zhang Y."/>
        </authorList>
    </citation>
    <scope>FUNCTION</scope>
    <scope>TMRNA-BINDING</scope>
    <scope>MUTAGENESIS OF ALA-438</scope>
    <source>
        <strain>H37Rv</strain>
    </source>
</reference>
<reference key="4">
    <citation type="journal article" date="2015" name="Mol. Microbiol.">
        <title>Structural basis for targeting the ribosomal protein S1 of Mycobacterium tuberculosis by pyrazinamide.</title>
        <authorList>
            <person name="Yang J."/>
            <person name="Liu Y."/>
            <person name="Bi J."/>
            <person name="Cai Q."/>
            <person name="Liao X."/>
            <person name="Li W."/>
            <person name="Guo C."/>
            <person name="Zhang Q."/>
            <person name="Lin T."/>
            <person name="Zhao Y."/>
            <person name="Wang H."/>
            <person name="Liu J."/>
            <person name="Zhang X."/>
            <person name="Lin D."/>
        </authorList>
    </citation>
    <scope>X-RAY CRYSTALLOGRAPHY (2.02 ANGSTROMS) OF 285-438 OF APOPROTEIN AND IN COMPLEX WITH POA</scope>
    <scope>DOMAIN</scope>
    <scope>TMRNA-BINDING</scope>
    <scope>MUTAGENESIS OF LYS-303; PHE-307; 307-PHE--PHE-310; PHE-310; ARG-357 AND ALA-438</scope>
    <source>
        <strain>ATCC 25618 / H37Rv</strain>
    </source>
</reference>
<evidence type="ECO:0000250" key="1">
    <source>
        <dbReference type="UniProtKB" id="P0AG67"/>
    </source>
</evidence>
<evidence type="ECO:0000255" key="2">
    <source>
        <dbReference type="PROSITE-ProRule" id="PRU00180"/>
    </source>
</evidence>
<evidence type="ECO:0000256" key="3">
    <source>
        <dbReference type="SAM" id="MobiDB-lite"/>
    </source>
</evidence>
<evidence type="ECO:0000269" key="4">
    <source>
    </source>
</evidence>
<evidence type="ECO:0000269" key="5">
    <source>
    </source>
</evidence>
<evidence type="ECO:0000305" key="6"/>
<evidence type="ECO:0000305" key="7">
    <source>
    </source>
</evidence>
<evidence type="ECO:0000305" key="8">
    <source>
    </source>
</evidence>
<evidence type="ECO:0007829" key="9">
    <source>
        <dbReference type="PDB" id="4NNG"/>
    </source>
</evidence>
<evidence type="ECO:0007829" key="10">
    <source>
        <dbReference type="PDB" id="4NNI"/>
    </source>
</evidence>